<reference key="1">
    <citation type="journal article" date="2004" name="Genome Res.">
        <title>The genome sequence of Mycoplasma mycoides subsp. mycoides SC type strain PG1T, the causative agent of contagious bovine pleuropneumonia (CBPP).</title>
        <authorList>
            <person name="Westberg J."/>
            <person name="Persson A."/>
            <person name="Holmberg A."/>
            <person name="Goesmann A."/>
            <person name="Lundeberg J."/>
            <person name="Johansson K.-E."/>
            <person name="Pettersson B."/>
            <person name="Uhlen M."/>
        </authorList>
    </citation>
    <scope>NUCLEOTIDE SEQUENCE [LARGE SCALE GENOMIC DNA]</scope>
    <source>
        <strain>CCUG 32753 / NCTC 10114 / PG1</strain>
    </source>
</reference>
<proteinExistence type="inferred from homology"/>
<dbReference type="EC" id="4.2.1.11" evidence="1"/>
<dbReference type="EMBL" id="BX293980">
    <property type="protein sequence ID" value="CAE76894.1"/>
    <property type="molecule type" value="Genomic_DNA"/>
</dbReference>
<dbReference type="RefSeq" id="NP_975252.1">
    <property type="nucleotide sequence ID" value="NC_005364.2"/>
</dbReference>
<dbReference type="RefSeq" id="WP_011166450.1">
    <property type="nucleotide sequence ID" value="NC_005364.2"/>
</dbReference>
<dbReference type="SMR" id="Q6MTZ2"/>
<dbReference type="STRING" id="272632.MSC_0253"/>
<dbReference type="KEGG" id="mmy:MSC_0253"/>
<dbReference type="PATRIC" id="fig|272632.4.peg.274"/>
<dbReference type="eggNOG" id="COG0148">
    <property type="taxonomic scope" value="Bacteria"/>
</dbReference>
<dbReference type="HOGENOM" id="CLU_031223_2_1_14"/>
<dbReference type="UniPathway" id="UPA00109">
    <property type="reaction ID" value="UER00187"/>
</dbReference>
<dbReference type="Proteomes" id="UP000001016">
    <property type="component" value="Chromosome"/>
</dbReference>
<dbReference type="GO" id="GO:0009986">
    <property type="term" value="C:cell surface"/>
    <property type="evidence" value="ECO:0007669"/>
    <property type="project" value="UniProtKB-SubCell"/>
</dbReference>
<dbReference type="GO" id="GO:0005576">
    <property type="term" value="C:extracellular region"/>
    <property type="evidence" value="ECO:0007669"/>
    <property type="project" value="UniProtKB-SubCell"/>
</dbReference>
<dbReference type="GO" id="GO:0000015">
    <property type="term" value="C:phosphopyruvate hydratase complex"/>
    <property type="evidence" value="ECO:0007669"/>
    <property type="project" value="InterPro"/>
</dbReference>
<dbReference type="GO" id="GO:0000287">
    <property type="term" value="F:magnesium ion binding"/>
    <property type="evidence" value="ECO:0007669"/>
    <property type="project" value="UniProtKB-UniRule"/>
</dbReference>
<dbReference type="GO" id="GO:0004634">
    <property type="term" value="F:phosphopyruvate hydratase activity"/>
    <property type="evidence" value="ECO:0007669"/>
    <property type="project" value="UniProtKB-UniRule"/>
</dbReference>
<dbReference type="GO" id="GO:0006096">
    <property type="term" value="P:glycolytic process"/>
    <property type="evidence" value="ECO:0007669"/>
    <property type="project" value="UniProtKB-UniRule"/>
</dbReference>
<dbReference type="CDD" id="cd03313">
    <property type="entry name" value="enolase"/>
    <property type="match status" value="1"/>
</dbReference>
<dbReference type="FunFam" id="3.30.390.10:FF:000001">
    <property type="entry name" value="Enolase"/>
    <property type="match status" value="1"/>
</dbReference>
<dbReference type="Gene3D" id="3.20.20.120">
    <property type="entry name" value="Enolase-like C-terminal domain"/>
    <property type="match status" value="1"/>
</dbReference>
<dbReference type="Gene3D" id="3.30.390.10">
    <property type="entry name" value="Enolase-like, N-terminal domain"/>
    <property type="match status" value="1"/>
</dbReference>
<dbReference type="HAMAP" id="MF_00318">
    <property type="entry name" value="Enolase"/>
    <property type="match status" value="1"/>
</dbReference>
<dbReference type="InterPro" id="IPR000941">
    <property type="entry name" value="Enolase"/>
</dbReference>
<dbReference type="InterPro" id="IPR036849">
    <property type="entry name" value="Enolase-like_C_sf"/>
</dbReference>
<dbReference type="InterPro" id="IPR029017">
    <property type="entry name" value="Enolase-like_N"/>
</dbReference>
<dbReference type="InterPro" id="IPR020810">
    <property type="entry name" value="Enolase_C"/>
</dbReference>
<dbReference type="InterPro" id="IPR020809">
    <property type="entry name" value="Enolase_CS"/>
</dbReference>
<dbReference type="InterPro" id="IPR020811">
    <property type="entry name" value="Enolase_N"/>
</dbReference>
<dbReference type="NCBIfam" id="TIGR01060">
    <property type="entry name" value="eno"/>
    <property type="match status" value="1"/>
</dbReference>
<dbReference type="PANTHER" id="PTHR11902">
    <property type="entry name" value="ENOLASE"/>
    <property type="match status" value="1"/>
</dbReference>
<dbReference type="PANTHER" id="PTHR11902:SF1">
    <property type="entry name" value="ENOLASE"/>
    <property type="match status" value="1"/>
</dbReference>
<dbReference type="Pfam" id="PF00113">
    <property type="entry name" value="Enolase_C"/>
    <property type="match status" value="1"/>
</dbReference>
<dbReference type="Pfam" id="PF03952">
    <property type="entry name" value="Enolase_N"/>
    <property type="match status" value="1"/>
</dbReference>
<dbReference type="PIRSF" id="PIRSF001400">
    <property type="entry name" value="Enolase"/>
    <property type="match status" value="1"/>
</dbReference>
<dbReference type="PRINTS" id="PR00148">
    <property type="entry name" value="ENOLASE"/>
</dbReference>
<dbReference type="SFLD" id="SFLDF00002">
    <property type="entry name" value="enolase"/>
    <property type="match status" value="1"/>
</dbReference>
<dbReference type="SFLD" id="SFLDG00178">
    <property type="entry name" value="enolase"/>
    <property type="match status" value="1"/>
</dbReference>
<dbReference type="SMART" id="SM01192">
    <property type="entry name" value="Enolase_C"/>
    <property type="match status" value="1"/>
</dbReference>
<dbReference type="SMART" id="SM01193">
    <property type="entry name" value="Enolase_N"/>
    <property type="match status" value="1"/>
</dbReference>
<dbReference type="SUPFAM" id="SSF51604">
    <property type="entry name" value="Enolase C-terminal domain-like"/>
    <property type="match status" value="1"/>
</dbReference>
<dbReference type="SUPFAM" id="SSF54826">
    <property type="entry name" value="Enolase N-terminal domain-like"/>
    <property type="match status" value="1"/>
</dbReference>
<dbReference type="PROSITE" id="PS00164">
    <property type="entry name" value="ENOLASE"/>
    <property type="match status" value="1"/>
</dbReference>
<organism>
    <name type="scientific">Mycoplasma mycoides subsp. mycoides SC (strain CCUG 32753 / NCTC 10114 / PG1)</name>
    <dbReference type="NCBI Taxonomy" id="272632"/>
    <lineage>
        <taxon>Bacteria</taxon>
        <taxon>Bacillati</taxon>
        <taxon>Mycoplasmatota</taxon>
        <taxon>Mollicutes</taxon>
        <taxon>Mycoplasmataceae</taxon>
        <taxon>Mycoplasma</taxon>
    </lineage>
</organism>
<protein>
    <recommendedName>
        <fullName evidence="1">Enolase</fullName>
        <ecNumber evidence="1">4.2.1.11</ecNumber>
    </recommendedName>
    <alternativeName>
        <fullName evidence="1">2-phospho-D-glycerate hydro-lyase</fullName>
    </alternativeName>
    <alternativeName>
        <fullName evidence="1">2-phosphoglycerate dehydratase</fullName>
    </alternativeName>
</protein>
<sequence length="451" mass="49537">MSRIERIFAREILDSRGTPTVEVEVWTEFGGYGCAKAPSGASTGVNEALELRDGDKARYNGKGVLKAVKNVNEIIAPKLIGVDALDQLTVDRIMLDLDGTEFKTKLGANGILAVSLAVAKSAASELDIPLYKYLGGVQAKKLPVPMLNVINGGEHADSAIDFQEFMIMPVGAKSFSEALRWSSETFQALKSLLKSKKDITAVGDEGGFAPNFEWAYEKHDLKSFKAKTPAEIALDLLVEAIKKAGYKPGKDGIMIAMDCASSELYLEDKKYHFKKIEKVTNQEWSLTTDEMISYLEKLVDNYPIISIEDGLAETDWEGFTKLTQKIGDKVQIVGDDLFTTNPKFIKQGINKKAANSTLIKLNQIGTLSETVEAITMTQKAGWTAVVSHRSGETEDTTIADLAVAFNTGQIKTGSMSRSDRIAKYNRLLQIESELDKNAVYDGLEAFYNLKK</sequence>
<evidence type="ECO:0000255" key="1">
    <source>
        <dbReference type="HAMAP-Rule" id="MF_00318"/>
    </source>
</evidence>
<name>ENO_MYCMS</name>
<gene>
    <name evidence="1" type="primary">eno</name>
    <name type="ordered locus">MSC_0253</name>
</gene>
<keyword id="KW-0963">Cytoplasm</keyword>
<keyword id="KW-0324">Glycolysis</keyword>
<keyword id="KW-0456">Lyase</keyword>
<keyword id="KW-0460">Magnesium</keyword>
<keyword id="KW-0479">Metal-binding</keyword>
<keyword id="KW-1185">Reference proteome</keyword>
<keyword id="KW-0964">Secreted</keyword>
<accession>Q6MTZ2</accession>
<comment type="function">
    <text evidence="1">Catalyzes the reversible conversion of 2-phosphoglycerate (2-PG) into phosphoenolpyruvate (PEP). It is essential for the degradation of carbohydrates via glycolysis.</text>
</comment>
<comment type="catalytic activity">
    <reaction evidence="1">
        <text>(2R)-2-phosphoglycerate = phosphoenolpyruvate + H2O</text>
        <dbReference type="Rhea" id="RHEA:10164"/>
        <dbReference type="ChEBI" id="CHEBI:15377"/>
        <dbReference type="ChEBI" id="CHEBI:58289"/>
        <dbReference type="ChEBI" id="CHEBI:58702"/>
        <dbReference type="EC" id="4.2.1.11"/>
    </reaction>
</comment>
<comment type="cofactor">
    <cofactor evidence="1">
        <name>Mg(2+)</name>
        <dbReference type="ChEBI" id="CHEBI:18420"/>
    </cofactor>
    <text evidence="1">Binds a second Mg(2+) ion via substrate during catalysis.</text>
</comment>
<comment type="pathway">
    <text evidence="1">Carbohydrate degradation; glycolysis; pyruvate from D-glyceraldehyde 3-phosphate: step 4/5.</text>
</comment>
<comment type="subcellular location">
    <subcellularLocation>
        <location evidence="1">Cytoplasm</location>
    </subcellularLocation>
    <subcellularLocation>
        <location evidence="1">Secreted</location>
    </subcellularLocation>
    <subcellularLocation>
        <location evidence="1">Cell surface</location>
    </subcellularLocation>
    <text evidence="1">Fractions of enolase are present in both the cytoplasm and on the cell surface.</text>
</comment>
<comment type="similarity">
    <text evidence="1">Belongs to the enolase family.</text>
</comment>
<feature type="chain" id="PRO_0000133927" description="Enolase">
    <location>
        <begin position="1"/>
        <end position="451"/>
    </location>
</feature>
<feature type="active site" description="Proton donor" evidence="1">
    <location>
        <position position="205"/>
    </location>
</feature>
<feature type="active site" description="Proton acceptor" evidence="1">
    <location>
        <position position="360"/>
    </location>
</feature>
<feature type="binding site" evidence="1">
    <location>
        <position position="163"/>
    </location>
    <ligand>
        <name>(2R)-2-phosphoglycerate</name>
        <dbReference type="ChEBI" id="CHEBI:58289"/>
    </ligand>
</feature>
<feature type="binding site" evidence="1">
    <location>
        <position position="258"/>
    </location>
    <ligand>
        <name>Mg(2+)</name>
        <dbReference type="ChEBI" id="CHEBI:18420"/>
    </ligand>
</feature>
<feature type="binding site" evidence="1">
    <location>
        <position position="308"/>
    </location>
    <ligand>
        <name>Mg(2+)</name>
        <dbReference type="ChEBI" id="CHEBI:18420"/>
    </ligand>
</feature>
<feature type="binding site" evidence="1">
    <location>
        <position position="335"/>
    </location>
    <ligand>
        <name>Mg(2+)</name>
        <dbReference type="ChEBI" id="CHEBI:18420"/>
    </ligand>
</feature>
<feature type="binding site" evidence="1">
    <location>
        <position position="360"/>
    </location>
    <ligand>
        <name>(2R)-2-phosphoglycerate</name>
        <dbReference type="ChEBI" id="CHEBI:58289"/>
    </ligand>
</feature>
<feature type="binding site" evidence="1">
    <location>
        <position position="389"/>
    </location>
    <ligand>
        <name>(2R)-2-phosphoglycerate</name>
        <dbReference type="ChEBI" id="CHEBI:58289"/>
    </ligand>
</feature>
<feature type="binding site" evidence="1">
    <location>
        <position position="390"/>
    </location>
    <ligand>
        <name>(2R)-2-phosphoglycerate</name>
        <dbReference type="ChEBI" id="CHEBI:58289"/>
    </ligand>
</feature>
<feature type="binding site" evidence="1">
    <location>
        <position position="411"/>
    </location>
    <ligand>
        <name>(2R)-2-phosphoglycerate</name>
        <dbReference type="ChEBI" id="CHEBI:58289"/>
    </ligand>
</feature>